<feature type="initiator methionine" description="Removed" evidence="1">
    <location>
        <position position="1"/>
    </location>
</feature>
<feature type="chain" id="PRO_0000078443" description="Chaperone protein DnaK">
    <location>
        <begin position="2"/>
        <end position="655"/>
    </location>
</feature>
<feature type="region of interest" description="Disordered" evidence="2">
    <location>
        <begin position="598"/>
        <end position="655"/>
    </location>
</feature>
<feature type="compositionally biased region" description="Low complexity" evidence="2">
    <location>
        <begin position="600"/>
        <end position="612"/>
    </location>
</feature>
<feature type="modified residue" description="Phosphothreonine; by autocatalysis" evidence="1">
    <location>
        <position position="201"/>
    </location>
</feature>
<feature type="sequence conflict" description="In Ref. 2; AAA23138." evidence="3" ref="2">
    <original>G</original>
    <variation>A</variation>
    <location>
        <position position="188"/>
    </location>
</feature>
<accession>P56836</accession>
<dbReference type="EMBL" id="AE002160">
    <property type="protein sequence ID" value="AAF39496.1"/>
    <property type="status" value="ALT_INIT"/>
    <property type="molecule type" value="Genomic_DNA"/>
</dbReference>
<dbReference type="EMBL" id="M62819">
    <property type="protein sequence ID" value="AAA23138.1"/>
    <property type="molecule type" value="Genomic_DNA"/>
</dbReference>
<dbReference type="PIR" id="H81676">
    <property type="entry name" value="H81676"/>
</dbReference>
<dbReference type="RefSeq" id="WP_010231193.1">
    <property type="nucleotide sequence ID" value="NZ_CP063055.1"/>
</dbReference>
<dbReference type="SMR" id="P56836"/>
<dbReference type="GeneID" id="1246036"/>
<dbReference type="KEGG" id="cmu:TC_0675"/>
<dbReference type="eggNOG" id="COG0443">
    <property type="taxonomic scope" value="Bacteria"/>
</dbReference>
<dbReference type="HOGENOM" id="CLU_005965_2_1_0"/>
<dbReference type="OrthoDB" id="9766019at2"/>
<dbReference type="Proteomes" id="UP000000800">
    <property type="component" value="Chromosome"/>
</dbReference>
<dbReference type="GO" id="GO:0005524">
    <property type="term" value="F:ATP binding"/>
    <property type="evidence" value="ECO:0007669"/>
    <property type="project" value="UniProtKB-UniRule"/>
</dbReference>
<dbReference type="GO" id="GO:0140662">
    <property type="term" value="F:ATP-dependent protein folding chaperone"/>
    <property type="evidence" value="ECO:0007669"/>
    <property type="project" value="InterPro"/>
</dbReference>
<dbReference type="GO" id="GO:0051082">
    <property type="term" value="F:unfolded protein binding"/>
    <property type="evidence" value="ECO:0007669"/>
    <property type="project" value="InterPro"/>
</dbReference>
<dbReference type="CDD" id="cd10234">
    <property type="entry name" value="ASKHA_NBD_HSP70_DnaK-like"/>
    <property type="match status" value="1"/>
</dbReference>
<dbReference type="FunFam" id="2.60.34.10:FF:000014">
    <property type="entry name" value="Chaperone protein DnaK HSP70"/>
    <property type="match status" value="1"/>
</dbReference>
<dbReference type="FunFam" id="3.30.420.40:FF:000020">
    <property type="entry name" value="Chaperone protein HscA homolog"/>
    <property type="match status" value="1"/>
</dbReference>
<dbReference type="FunFam" id="3.30.30.30:FF:000005">
    <property type="entry name" value="Heat shock protein ssb1"/>
    <property type="match status" value="1"/>
</dbReference>
<dbReference type="FunFam" id="1.20.1270.10:FF:000001">
    <property type="entry name" value="Molecular chaperone DnaK"/>
    <property type="match status" value="1"/>
</dbReference>
<dbReference type="FunFam" id="3.30.420.40:FF:000004">
    <property type="entry name" value="Molecular chaperone DnaK"/>
    <property type="match status" value="1"/>
</dbReference>
<dbReference type="FunFam" id="3.90.640.10:FF:000003">
    <property type="entry name" value="Molecular chaperone DnaK"/>
    <property type="match status" value="1"/>
</dbReference>
<dbReference type="Gene3D" id="1.20.1270.10">
    <property type="match status" value="1"/>
</dbReference>
<dbReference type="Gene3D" id="3.30.420.40">
    <property type="match status" value="2"/>
</dbReference>
<dbReference type="Gene3D" id="3.90.640.10">
    <property type="entry name" value="Actin, Chain A, domain 4"/>
    <property type="match status" value="1"/>
</dbReference>
<dbReference type="Gene3D" id="2.60.34.10">
    <property type="entry name" value="Substrate Binding Domain Of DNAk, Chain A, domain 1"/>
    <property type="match status" value="1"/>
</dbReference>
<dbReference type="HAMAP" id="MF_00332">
    <property type="entry name" value="DnaK"/>
    <property type="match status" value="1"/>
</dbReference>
<dbReference type="InterPro" id="IPR043129">
    <property type="entry name" value="ATPase_NBD"/>
</dbReference>
<dbReference type="InterPro" id="IPR012725">
    <property type="entry name" value="Chaperone_DnaK"/>
</dbReference>
<dbReference type="InterPro" id="IPR018181">
    <property type="entry name" value="Heat_shock_70_CS"/>
</dbReference>
<dbReference type="InterPro" id="IPR029048">
    <property type="entry name" value="HSP70_C_sf"/>
</dbReference>
<dbReference type="InterPro" id="IPR029047">
    <property type="entry name" value="HSP70_peptide-bd_sf"/>
</dbReference>
<dbReference type="InterPro" id="IPR013126">
    <property type="entry name" value="Hsp_70_fam"/>
</dbReference>
<dbReference type="NCBIfam" id="NF001413">
    <property type="entry name" value="PRK00290.1"/>
    <property type="match status" value="1"/>
</dbReference>
<dbReference type="NCBIfam" id="TIGR02350">
    <property type="entry name" value="prok_dnaK"/>
    <property type="match status" value="1"/>
</dbReference>
<dbReference type="PANTHER" id="PTHR19375">
    <property type="entry name" value="HEAT SHOCK PROTEIN 70KDA"/>
    <property type="match status" value="1"/>
</dbReference>
<dbReference type="Pfam" id="PF00012">
    <property type="entry name" value="HSP70"/>
    <property type="match status" value="1"/>
</dbReference>
<dbReference type="PRINTS" id="PR00301">
    <property type="entry name" value="HEATSHOCK70"/>
</dbReference>
<dbReference type="SUPFAM" id="SSF53067">
    <property type="entry name" value="Actin-like ATPase domain"/>
    <property type="match status" value="2"/>
</dbReference>
<dbReference type="SUPFAM" id="SSF100934">
    <property type="entry name" value="Heat shock protein 70kD (HSP70), C-terminal subdomain"/>
    <property type="match status" value="1"/>
</dbReference>
<dbReference type="SUPFAM" id="SSF100920">
    <property type="entry name" value="Heat shock protein 70kD (HSP70), peptide-binding domain"/>
    <property type="match status" value="1"/>
</dbReference>
<dbReference type="PROSITE" id="PS00297">
    <property type="entry name" value="HSP70_1"/>
    <property type="match status" value="1"/>
</dbReference>
<dbReference type="PROSITE" id="PS00329">
    <property type="entry name" value="HSP70_2"/>
    <property type="match status" value="1"/>
</dbReference>
<dbReference type="PROSITE" id="PS01036">
    <property type="entry name" value="HSP70_3"/>
    <property type="match status" value="1"/>
</dbReference>
<name>DNAK_CHLMU</name>
<comment type="function">
    <text evidence="1">Acts as a chaperone.</text>
</comment>
<comment type="induction">
    <text evidence="1">By stress conditions e.g. heat shock (By similarity).</text>
</comment>
<comment type="miscellaneous">
    <text>Expressed early during infection.</text>
</comment>
<comment type="similarity">
    <text evidence="3">Belongs to the heat shock protein 70 family.</text>
</comment>
<comment type="sequence caution" evidence="3">
    <conflict type="erroneous initiation">
        <sequence resource="EMBL-CDS" id="AAF39496"/>
    </conflict>
</comment>
<protein>
    <recommendedName>
        <fullName>Chaperone protein DnaK</fullName>
    </recommendedName>
    <alternativeName>
        <fullName>75 kDa membrane protein</fullName>
    </alternativeName>
    <alternativeName>
        <fullName>HSP70</fullName>
    </alternativeName>
    <alternativeName>
        <fullName>Heat shock 70 kDa protein</fullName>
    </alternativeName>
    <alternativeName>
        <fullName>Heat shock protein 70</fullName>
    </alternativeName>
</protein>
<gene>
    <name type="primary">dnaK</name>
    <name type="ordered locus">TC_0675</name>
</gene>
<proteinExistence type="inferred from homology"/>
<keyword id="KW-0067">ATP-binding</keyword>
<keyword id="KW-0143">Chaperone</keyword>
<keyword id="KW-0547">Nucleotide-binding</keyword>
<keyword id="KW-0597">Phosphoprotein</keyword>
<keyword id="KW-0346">Stress response</keyword>
<sequence length="655" mass="70572">MSEKRKSNKIIGIDLGTTNSCVSVMEGGQPKVIASSEGTRTTPSIVAFKGSETLVGIPAKRQAVTNPEKTLASTKRFIGRKFSEVESEIKTVPYKVAPNSKGDAVFEVENKLYTPEEIGAQILMKMKETAEAYLGETVTEAVITVPAYFNDSQRASTKDAGRIAGLDVKRIIPEPTAAALAYGIDKEGDKKIAVFDLGGGTFDISILEIGDGVFEVLSTNGDTHLGGDDFDEVIINWMLGEFKKQEGIDLSKDNMALQRLKDAAEKAKIELSGVSSTEINQPFITIDANGPKHLALTLTRAQFEHLASSLIERTKQPCAQALKDAKLSASDIDDVLLVGGMSRMPAVQAVVKEIFGKEPNKGVNPDEVVAIGAAIQGGVLGGEVKDVLLLDVIPLSLGIETLGGVMTPLVERNTTIPTQKKQIFSTAADNQPAVTIVVLQGERPMAKDNKEIGRFDLTDIPPAPRGHPQIEVTFDIDANGILHVSAKDAASGREQKIRIEASSGLKEEEIQQMIRDAELNKEEDKKRREASDIKNEADGMIFRAEKAIKDYQDKIPADLVKEIEEQIEKVRQAVKEDASTTAIKAASDELSARMQKIGEAMQAQSASAANAQGGPNINSEDLKKHSFSTRPPAGDNSSSTDNIEDADVEIVDKPE</sequence>
<organism>
    <name type="scientific">Chlamydia muridarum (strain MoPn / Nigg)</name>
    <dbReference type="NCBI Taxonomy" id="243161"/>
    <lineage>
        <taxon>Bacteria</taxon>
        <taxon>Pseudomonadati</taxon>
        <taxon>Chlamydiota</taxon>
        <taxon>Chlamydiia</taxon>
        <taxon>Chlamydiales</taxon>
        <taxon>Chlamydiaceae</taxon>
        <taxon>Chlamydia/Chlamydophila group</taxon>
        <taxon>Chlamydia</taxon>
    </lineage>
</organism>
<reference key="1">
    <citation type="journal article" date="2000" name="Nucleic Acids Res.">
        <title>Genome sequences of Chlamydia trachomatis MoPn and Chlamydia pneumoniae AR39.</title>
        <authorList>
            <person name="Read T.D."/>
            <person name="Brunham R.C."/>
            <person name="Shen C."/>
            <person name="Gill S.R."/>
            <person name="Heidelberg J.F."/>
            <person name="White O."/>
            <person name="Hickey E.K."/>
            <person name="Peterson J.D."/>
            <person name="Utterback T.R."/>
            <person name="Berry K.J."/>
            <person name="Bass S."/>
            <person name="Linher K.D."/>
            <person name="Weidman J.F."/>
            <person name="Khouri H.M."/>
            <person name="Craven B."/>
            <person name="Bowman C."/>
            <person name="Dodson R.J."/>
            <person name="Gwinn M.L."/>
            <person name="Nelson W.C."/>
            <person name="DeBoy R.T."/>
            <person name="Kolonay J.F."/>
            <person name="McClarty G."/>
            <person name="Salzberg S.L."/>
            <person name="Eisen J.A."/>
            <person name="Fraser C.M."/>
        </authorList>
    </citation>
    <scope>NUCLEOTIDE SEQUENCE [LARGE SCALE GENOMIC DNA]</scope>
    <source>
        <strain>MoPn / Nigg</strain>
    </source>
</reference>
<reference key="2">
    <citation type="journal article" date="1990" name="J. Bacteriol.">
        <title>Heat shock response of murine Chlamydia trachomatis.</title>
        <authorList>
            <person name="Engel J.N."/>
            <person name="Pollack J."/>
            <person name="Perara E."/>
            <person name="Ganem D."/>
        </authorList>
    </citation>
    <scope>NUCLEOTIDE SEQUENCE [GENOMIC DNA] OF 1-242</scope>
    <source>
        <strain>MoPn</strain>
    </source>
</reference>
<evidence type="ECO:0000250" key="1"/>
<evidence type="ECO:0000256" key="2">
    <source>
        <dbReference type="SAM" id="MobiDB-lite"/>
    </source>
</evidence>
<evidence type="ECO:0000305" key="3"/>